<feature type="chain" id="PRO_0000234655" description="Pleiotropic drug resistance protein 1">
    <location>
        <begin position="1"/>
        <end position="1434"/>
    </location>
</feature>
<feature type="transmembrane region" description="Helical" evidence="2">
    <location>
        <begin position="530"/>
        <end position="550"/>
    </location>
</feature>
<feature type="transmembrane region" description="Helical" evidence="2">
    <location>
        <begin position="563"/>
        <end position="583"/>
    </location>
</feature>
<feature type="transmembrane region" description="Helical" evidence="2">
    <location>
        <begin position="618"/>
        <end position="638"/>
    </location>
</feature>
<feature type="transmembrane region" description="Helical" evidence="2">
    <location>
        <begin position="649"/>
        <end position="669"/>
    </location>
</feature>
<feature type="transmembrane region" description="Helical" evidence="2">
    <location>
        <begin position="675"/>
        <end position="695"/>
    </location>
</feature>
<feature type="transmembrane region" description="Helical" evidence="2">
    <location>
        <begin position="702"/>
        <end position="722"/>
    </location>
</feature>
<feature type="transmembrane region" description="Helical" evidence="2">
    <location>
        <begin position="760"/>
        <end position="780"/>
    </location>
</feature>
<feature type="transmembrane region" description="Helical" evidence="2">
    <location>
        <begin position="1181"/>
        <end position="1201"/>
    </location>
</feature>
<feature type="transmembrane region" description="Helical" evidence="2">
    <location>
        <begin position="1221"/>
        <end position="1241"/>
    </location>
</feature>
<feature type="transmembrane region" description="Helical" evidence="2">
    <location>
        <begin position="1269"/>
        <end position="1289"/>
    </location>
</feature>
<feature type="transmembrane region" description="Helical" evidence="2">
    <location>
        <begin position="1296"/>
        <end position="1316"/>
    </location>
</feature>
<feature type="transmembrane region" description="Helical" evidence="2">
    <location>
        <begin position="1326"/>
        <end position="1346"/>
    </location>
</feature>
<feature type="transmembrane region" description="Helical" evidence="2">
    <location>
        <begin position="1357"/>
        <end position="1377"/>
    </location>
</feature>
<feature type="transmembrane region" description="Helical" evidence="2">
    <location>
        <begin position="1406"/>
        <end position="1426"/>
    </location>
</feature>
<feature type="domain" description="ABC transporter 1" evidence="3">
    <location>
        <begin position="161"/>
        <end position="434"/>
    </location>
</feature>
<feature type="domain" description="ABC transmembrane type-2 1">
    <location>
        <begin position="512"/>
        <end position="725"/>
    </location>
</feature>
<feature type="domain" description="ABC transporter 2" evidence="3">
    <location>
        <begin position="837"/>
        <end position="1089"/>
    </location>
</feature>
<feature type="domain" description="ABC transmembrane type-2 2">
    <location>
        <begin position="1162"/>
        <end position="1376"/>
    </location>
</feature>
<feature type="region of interest" description="Disordered" evidence="4">
    <location>
        <begin position="1"/>
        <end position="22"/>
    </location>
</feature>
<feature type="region of interest" description="Disordered" evidence="4">
    <location>
        <begin position="793"/>
        <end position="824"/>
    </location>
</feature>
<feature type="compositionally biased region" description="Polar residues" evidence="4">
    <location>
        <begin position="804"/>
        <end position="824"/>
    </location>
</feature>
<feature type="binding site" evidence="3">
    <location>
        <begin position="194"/>
        <end position="201"/>
    </location>
    <ligand>
        <name>ATP</name>
        <dbReference type="ChEBI" id="CHEBI:30616"/>
        <label>1</label>
    </ligand>
</feature>
<feature type="binding site" evidence="3">
    <location>
        <begin position="882"/>
        <end position="889"/>
    </location>
    <ligand>
        <name>ATP</name>
        <dbReference type="ChEBI" id="CHEBI:30616"/>
        <label>2</label>
    </ligand>
</feature>
<feature type="sequence conflict" description="In Ref. 1; BAB92011." evidence="6" ref="1">
    <original>T</original>
    <variation>P</variation>
    <location>
        <position position="810"/>
    </location>
</feature>
<reference key="1">
    <citation type="journal article" date="2002" name="FEBS Lett.">
        <title>cDNA cloning and characterization of tobacco ABC transporter: NtPDR1 is a novel elicitor-responsive gene.</title>
        <authorList>
            <person name="Sasabe M."/>
            <person name="Toyoda K."/>
            <person name="Shiraishi T."/>
            <person name="Inagaki Y."/>
            <person name="Ichinose Y."/>
        </authorList>
    </citation>
    <scope>NUCLEOTIDE SEQUENCE [MRNA]</scope>
    <scope>FUNCTION</scope>
    <scope>INDUCTION</scope>
    <source>
        <strain>cv. Bright Yellow 2</strain>
    </source>
</reference>
<reference key="2">
    <citation type="journal article" date="2003" name="Genes Genet. Syst.">
        <title>Genomic structure of the NtPDR1 gene, harboring the two miniature inverted-repeat transposable elements, NtToya1 and NtStowaway101.</title>
        <authorList>
            <person name="Schenke D."/>
            <person name="Sasabe M."/>
            <person name="Toyoda K."/>
            <person name="Inagaki Y."/>
            <person name="Shiraishi T."/>
            <person name="Ichinose Y."/>
        </authorList>
    </citation>
    <scope>NUCLEOTIDE SEQUENCE [GENOMIC DNA]</scope>
    <source>
        <strain>cv. Bright Yellow 2</strain>
    </source>
</reference>
<reference key="3">
    <citation type="journal article" date="2006" name="FEBS Lett.">
        <title>Organization and function of the plant pleiotropic drug resistance ABC transporter family.</title>
        <authorList>
            <person name="Crouzet J."/>
            <person name="Trombik T."/>
            <person name="Fraysse A.S."/>
            <person name="Boutry M."/>
        </authorList>
    </citation>
    <scope>GENE FAMILY</scope>
    <scope>NOMENCLATURE</scope>
</reference>
<dbReference type="EMBL" id="AB075550">
    <property type="protein sequence ID" value="BAB92011.1"/>
    <property type="molecule type" value="mRNA"/>
</dbReference>
<dbReference type="EMBL" id="AB109388">
    <property type="protein sequence ID" value="BAD07483.1"/>
    <property type="molecule type" value="Genomic_DNA"/>
</dbReference>
<dbReference type="RefSeq" id="NP_001312599.1">
    <property type="nucleotide sequence ID" value="NM_001325670.1"/>
</dbReference>
<dbReference type="RefSeq" id="XP_016478140.1">
    <property type="nucleotide sequence ID" value="XM_016622654.1"/>
</dbReference>
<dbReference type="SMR" id="Q76CU2"/>
<dbReference type="STRING" id="4097.Q76CU2"/>
<dbReference type="PaxDb" id="4097-Q76CU2"/>
<dbReference type="GeneID" id="107799533"/>
<dbReference type="KEGG" id="nta:107799533"/>
<dbReference type="OMA" id="RNFGFIC"/>
<dbReference type="OrthoDB" id="66620at2759"/>
<dbReference type="PhylomeDB" id="Q76CU2"/>
<dbReference type="Proteomes" id="UP000084051">
    <property type="component" value="Unplaced"/>
</dbReference>
<dbReference type="GO" id="GO:0016020">
    <property type="term" value="C:membrane"/>
    <property type="evidence" value="ECO:0007669"/>
    <property type="project" value="UniProtKB-SubCell"/>
</dbReference>
<dbReference type="GO" id="GO:0140359">
    <property type="term" value="F:ABC-type transporter activity"/>
    <property type="evidence" value="ECO:0007669"/>
    <property type="project" value="InterPro"/>
</dbReference>
<dbReference type="GO" id="GO:0005524">
    <property type="term" value="F:ATP binding"/>
    <property type="evidence" value="ECO:0007669"/>
    <property type="project" value="UniProtKB-KW"/>
</dbReference>
<dbReference type="GO" id="GO:0016887">
    <property type="term" value="F:ATP hydrolysis activity"/>
    <property type="evidence" value="ECO:0007669"/>
    <property type="project" value="InterPro"/>
</dbReference>
<dbReference type="CDD" id="cd03233">
    <property type="entry name" value="ABCG_PDR_domain1"/>
    <property type="match status" value="1"/>
</dbReference>
<dbReference type="CDD" id="cd03232">
    <property type="entry name" value="ABCG_PDR_domain2"/>
    <property type="match status" value="1"/>
</dbReference>
<dbReference type="FunFam" id="3.40.50.300:FF:000179">
    <property type="entry name" value="ABC transporter G family member 34"/>
    <property type="match status" value="1"/>
</dbReference>
<dbReference type="FunFam" id="3.40.50.300:FF:000059">
    <property type="entry name" value="ABC transporter G family member 40"/>
    <property type="match status" value="1"/>
</dbReference>
<dbReference type="Gene3D" id="3.40.50.300">
    <property type="entry name" value="P-loop containing nucleotide triphosphate hydrolases"/>
    <property type="match status" value="2"/>
</dbReference>
<dbReference type="InterPro" id="IPR003593">
    <property type="entry name" value="AAA+_ATPase"/>
</dbReference>
<dbReference type="InterPro" id="IPR013525">
    <property type="entry name" value="ABC2_TM"/>
</dbReference>
<dbReference type="InterPro" id="IPR029481">
    <property type="entry name" value="ABC_trans_N"/>
</dbReference>
<dbReference type="InterPro" id="IPR003439">
    <property type="entry name" value="ABC_transporter-like_ATP-bd"/>
</dbReference>
<dbReference type="InterPro" id="IPR043926">
    <property type="entry name" value="ABCG_dom"/>
</dbReference>
<dbReference type="InterPro" id="IPR034001">
    <property type="entry name" value="ABCG_PDR_1"/>
</dbReference>
<dbReference type="InterPro" id="IPR034003">
    <property type="entry name" value="ABCG_PDR_2"/>
</dbReference>
<dbReference type="InterPro" id="IPR027417">
    <property type="entry name" value="P-loop_NTPase"/>
</dbReference>
<dbReference type="InterPro" id="IPR013581">
    <property type="entry name" value="PDR_assoc"/>
</dbReference>
<dbReference type="PANTHER" id="PTHR48040:SF14">
    <property type="entry name" value="ABC TRANSPORTER DOMAIN-CONTAINING PROTEIN"/>
    <property type="match status" value="1"/>
</dbReference>
<dbReference type="PANTHER" id="PTHR48040">
    <property type="entry name" value="PLEIOTROPIC DRUG RESISTANCE PROTEIN 1-LIKE ISOFORM X1"/>
    <property type="match status" value="1"/>
</dbReference>
<dbReference type="Pfam" id="PF01061">
    <property type="entry name" value="ABC2_membrane"/>
    <property type="match status" value="2"/>
</dbReference>
<dbReference type="Pfam" id="PF19055">
    <property type="entry name" value="ABC2_membrane_7"/>
    <property type="match status" value="1"/>
</dbReference>
<dbReference type="Pfam" id="PF00005">
    <property type="entry name" value="ABC_tran"/>
    <property type="match status" value="2"/>
</dbReference>
<dbReference type="Pfam" id="PF14510">
    <property type="entry name" value="ABC_trans_N"/>
    <property type="match status" value="1"/>
</dbReference>
<dbReference type="Pfam" id="PF08370">
    <property type="entry name" value="PDR_assoc"/>
    <property type="match status" value="1"/>
</dbReference>
<dbReference type="SMART" id="SM00382">
    <property type="entry name" value="AAA"/>
    <property type="match status" value="2"/>
</dbReference>
<dbReference type="SUPFAM" id="SSF52540">
    <property type="entry name" value="P-loop containing nucleoside triphosphate hydrolases"/>
    <property type="match status" value="2"/>
</dbReference>
<dbReference type="PROSITE" id="PS50893">
    <property type="entry name" value="ABC_TRANSPORTER_2"/>
    <property type="match status" value="2"/>
</dbReference>
<proteinExistence type="evidence at transcript level"/>
<gene>
    <name type="primary">PDR1</name>
</gene>
<protein>
    <recommendedName>
        <fullName>Pleiotropic drug resistance protein 1</fullName>
    </recommendedName>
    <alternativeName>
        <fullName>NtPDR1</fullName>
    </alternativeName>
</protein>
<sequence length="1434" mass="161683">MEPANLSNLRGSSLRGSTRGSLRANSNSIWRNNGVEIFSRSSRDEDDEEALKWAALEKLPTFDRLRKGLLFGSQGAAAEVDINDLGFQERKNLLERLVKVADEDNEKFLLKLKNRIDRVGIDLPTIEVRYEHLNIDADAYVGSRSLPTFMNFMTNFVETLLNSLHILSSRKRQLTILKDISGIIKPCRMTLLLGPPSSGKTTLLLALAGKLDPALKVTGKVSYNGHELHEFVPQRTAAYISQHDLHIGEMTVRETLEFSARCQGVGSRFEMLAELSRREKAANIKPDADIDIYMKAAATEGQEANVVTDYVLKILGLDICADTMVGDDMIRGISGGQKKRVTTGEMLVGPSKALFMDEISTGLDSSTTYSIVNSLRQSVQILKGTAVISLLQPAPETYNLFDDIILLSDGYIVYQGPRDDVLEFFESMGFKCPQRKGVADFLQEVTSKKDQQQYWSKRNEPYRFITSKEFAEAYQSFHVGRKLGDELATPFDKTKCHPAALTNEKYGIGKKELLKVCTERELLLMKRNSFVYMFKFSQLTIMALITMTLFFRTEMPRDTTDDGGIYAGALFFVVIMIMFNGMSELAMTIFKLPVFYKQRDLLFFPSWAYAIPSWILKIPVTLVEVGLWVILTYYVIGFDPNITRFLKQFLLLIVVNQMASGMFRFIGAVGRTMGVASTFGSFALLLQFALGGFVLSRDDVKSWWIWGYWISPMMYSVNSILVNEFDGKKWNHIVPGGNETLGSTVVKSRGFFPEAYWYWIGVGALVGFTVVFNFCYSLALAYLNPFDKPQAVLPEDGENAENGEVSSQITSTDGGDSISESQNNKKGMVLPFEPHSITFDDVVYSVDMPQEMKEQGAGEDRLVLLKGVSGAFRPGVLTALMGVSGAGKTTLMDVLAGRKTGGYIDGEIKISGYPKKQETFARISGYCEQNDIHSPYVTVYESLVYSAWLRLPQDVDEKTRKMFVDEVMELVELGPLRSALVGLPGVNGLSTEQRKRLTIAVELVANPSIIFMDEPTSGLDARAAAIVMRTVRNTVDTGRTVVCTIHQPSIDIFEAFDELFLMKRGGQEIYVGPLGRHSCHLIKYFESNPGVAKIKEGYNPATWMLEVTASAQEMMLGIDFTEVYKNSDLYRRNKALISELGVPRPGSKDLHFETQYSQSFWTQCVACLWKQHWSYWRNPAYTAVRFIFTTFIALIFGTMFWDLGTKVSKSQDLLNAMGSMYAAVLFLGVQNASSVQPVVAIERTVFYRERAAGMYSAIPYAFGQVSIEIPYIFVQSVFYGIIVYAMIGFEWDVGKFFWYLFIMFFTLLYFTFYGMMGVAVTPNQNVASIVAAFFYGVWNLFSGFIIPRPRMPVWWRWYYWANPVAWTLYGLVASQFGDIQTKLSDNETVEQFLRRYFGFKHDFLGVVAAVLTAYVFMFAFTFAFAIKAFNFQRR</sequence>
<evidence type="ECO:0000250" key="1"/>
<evidence type="ECO:0000255" key="2"/>
<evidence type="ECO:0000255" key="3">
    <source>
        <dbReference type="PROSITE-ProRule" id="PRU00434"/>
    </source>
</evidence>
<evidence type="ECO:0000256" key="4">
    <source>
        <dbReference type="SAM" id="MobiDB-lite"/>
    </source>
</evidence>
<evidence type="ECO:0000269" key="5">
    <source>
    </source>
</evidence>
<evidence type="ECO:0000305" key="6"/>
<comment type="function">
    <text evidence="5">May be a general defense protein.</text>
</comment>
<comment type="subcellular location">
    <subcellularLocation>
        <location evidence="1">Membrane</location>
        <topology evidence="1">Multi-pass membrane protein</topology>
    </subcellularLocation>
</comment>
<comment type="induction">
    <text evidence="5">By the phytohormone methyl jasmonate (MeJA), defense elicitors (INF1 elicitin of P.infestans, flagellin of P.syringae and yeast extract), and protein phosphatase inhibitor (cantharidin). Repressed by protein kinase inhibitor (K252a) and cycloheximide.</text>
</comment>
<comment type="similarity">
    <text evidence="6">Belongs to the ABC transporter superfamily. ABCG family. PDR (TC 3.A.1.205) subfamily.</text>
</comment>
<accession>Q76CU2</accession>
<accession>Q8LP45</accession>
<keyword id="KW-0067">ATP-binding</keyword>
<keyword id="KW-0472">Membrane</keyword>
<keyword id="KW-0547">Nucleotide-binding</keyword>
<keyword id="KW-1185">Reference proteome</keyword>
<keyword id="KW-0677">Repeat</keyword>
<keyword id="KW-0812">Transmembrane</keyword>
<keyword id="KW-1133">Transmembrane helix</keyword>
<keyword id="KW-0813">Transport</keyword>
<name>PDR1_TOBAC</name>
<organism>
    <name type="scientific">Nicotiana tabacum</name>
    <name type="common">Common tobacco</name>
    <dbReference type="NCBI Taxonomy" id="4097"/>
    <lineage>
        <taxon>Eukaryota</taxon>
        <taxon>Viridiplantae</taxon>
        <taxon>Streptophyta</taxon>
        <taxon>Embryophyta</taxon>
        <taxon>Tracheophyta</taxon>
        <taxon>Spermatophyta</taxon>
        <taxon>Magnoliopsida</taxon>
        <taxon>eudicotyledons</taxon>
        <taxon>Gunneridae</taxon>
        <taxon>Pentapetalae</taxon>
        <taxon>asterids</taxon>
        <taxon>lamiids</taxon>
        <taxon>Solanales</taxon>
        <taxon>Solanaceae</taxon>
        <taxon>Nicotianoideae</taxon>
        <taxon>Nicotianeae</taxon>
        <taxon>Nicotiana</taxon>
    </lineage>
</organism>